<dbReference type="EMBL" id="CP000967">
    <property type="protein sequence ID" value="ACD59739.1"/>
    <property type="molecule type" value="Genomic_DNA"/>
</dbReference>
<dbReference type="RefSeq" id="WP_011258549.1">
    <property type="nucleotide sequence ID" value="NC_010717.2"/>
</dbReference>
<dbReference type="SMR" id="B2SSQ0"/>
<dbReference type="KEGG" id="xop:PXO_01656"/>
<dbReference type="eggNOG" id="COG0509">
    <property type="taxonomic scope" value="Bacteria"/>
</dbReference>
<dbReference type="HOGENOM" id="CLU_097408_2_2_6"/>
<dbReference type="Proteomes" id="UP000001740">
    <property type="component" value="Chromosome"/>
</dbReference>
<dbReference type="GO" id="GO:0005829">
    <property type="term" value="C:cytosol"/>
    <property type="evidence" value="ECO:0007669"/>
    <property type="project" value="TreeGrafter"/>
</dbReference>
<dbReference type="GO" id="GO:0005960">
    <property type="term" value="C:glycine cleavage complex"/>
    <property type="evidence" value="ECO:0007669"/>
    <property type="project" value="InterPro"/>
</dbReference>
<dbReference type="GO" id="GO:0019464">
    <property type="term" value="P:glycine decarboxylation via glycine cleavage system"/>
    <property type="evidence" value="ECO:0007669"/>
    <property type="project" value="UniProtKB-UniRule"/>
</dbReference>
<dbReference type="CDD" id="cd06848">
    <property type="entry name" value="GCS_H"/>
    <property type="match status" value="1"/>
</dbReference>
<dbReference type="Gene3D" id="2.40.50.100">
    <property type="match status" value="1"/>
</dbReference>
<dbReference type="HAMAP" id="MF_00272">
    <property type="entry name" value="GcvH"/>
    <property type="match status" value="1"/>
</dbReference>
<dbReference type="InterPro" id="IPR003016">
    <property type="entry name" value="2-oxoA_DH_lipoyl-BS"/>
</dbReference>
<dbReference type="InterPro" id="IPR000089">
    <property type="entry name" value="Biotin_lipoyl"/>
</dbReference>
<dbReference type="InterPro" id="IPR002930">
    <property type="entry name" value="GCV_H"/>
</dbReference>
<dbReference type="InterPro" id="IPR033753">
    <property type="entry name" value="GCV_H/Fam206"/>
</dbReference>
<dbReference type="InterPro" id="IPR017453">
    <property type="entry name" value="GCV_H_sub"/>
</dbReference>
<dbReference type="InterPro" id="IPR011053">
    <property type="entry name" value="Single_hybrid_motif"/>
</dbReference>
<dbReference type="NCBIfam" id="TIGR00527">
    <property type="entry name" value="gcvH"/>
    <property type="match status" value="1"/>
</dbReference>
<dbReference type="NCBIfam" id="NF002270">
    <property type="entry name" value="PRK01202.1"/>
    <property type="match status" value="1"/>
</dbReference>
<dbReference type="PANTHER" id="PTHR11715">
    <property type="entry name" value="GLYCINE CLEAVAGE SYSTEM H PROTEIN"/>
    <property type="match status" value="1"/>
</dbReference>
<dbReference type="PANTHER" id="PTHR11715:SF3">
    <property type="entry name" value="GLYCINE CLEAVAGE SYSTEM H PROTEIN-RELATED"/>
    <property type="match status" value="1"/>
</dbReference>
<dbReference type="Pfam" id="PF01597">
    <property type="entry name" value="GCV_H"/>
    <property type="match status" value="1"/>
</dbReference>
<dbReference type="SUPFAM" id="SSF51230">
    <property type="entry name" value="Single hybrid motif"/>
    <property type="match status" value="1"/>
</dbReference>
<dbReference type="PROSITE" id="PS50968">
    <property type="entry name" value="BIOTINYL_LIPOYL"/>
    <property type="match status" value="1"/>
</dbReference>
<dbReference type="PROSITE" id="PS00189">
    <property type="entry name" value="LIPOYL"/>
    <property type="match status" value="1"/>
</dbReference>
<reference key="1">
    <citation type="journal article" date="2008" name="BMC Genomics">
        <title>Genome sequence and rapid evolution of the rice pathogen Xanthomonas oryzae pv. oryzae PXO99A.</title>
        <authorList>
            <person name="Salzberg S.L."/>
            <person name="Sommer D.D."/>
            <person name="Schatz M.C."/>
            <person name="Phillippy A.M."/>
            <person name="Rabinowicz P.D."/>
            <person name="Tsuge S."/>
            <person name="Furutani A."/>
            <person name="Ochiai H."/>
            <person name="Delcher A.L."/>
            <person name="Kelley D."/>
            <person name="Madupu R."/>
            <person name="Puiu D."/>
            <person name="Radune D."/>
            <person name="Shumway M."/>
            <person name="Trapnell C."/>
            <person name="Aparna G."/>
            <person name="Jha G."/>
            <person name="Pandey A."/>
            <person name="Patil P.B."/>
            <person name="Ishihara H."/>
            <person name="Meyer D.F."/>
            <person name="Szurek B."/>
            <person name="Verdier V."/>
            <person name="Koebnik R."/>
            <person name="Dow J.M."/>
            <person name="Ryan R.P."/>
            <person name="Hirata H."/>
            <person name="Tsuyumu S."/>
            <person name="Won Lee S."/>
            <person name="Seo Y.-S."/>
            <person name="Sriariyanum M."/>
            <person name="Ronald P.C."/>
            <person name="Sonti R.V."/>
            <person name="Van Sluys M.-A."/>
            <person name="Leach J.E."/>
            <person name="White F.F."/>
            <person name="Bogdanove A.J."/>
        </authorList>
    </citation>
    <scope>NUCLEOTIDE SEQUENCE [LARGE SCALE GENOMIC DNA]</scope>
    <source>
        <strain>PXO99A</strain>
    </source>
</reference>
<proteinExistence type="inferred from homology"/>
<accession>B2SSQ0</accession>
<gene>
    <name evidence="1" type="primary">gcvH</name>
    <name type="ordered locus">PXO_01656</name>
</gene>
<name>GCSH_XANOP</name>
<evidence type="ECO:0000255" key="1">
    <source>
        <dbReference type="HAMAP-Rule" id="MF_00272"/>
    </source>
</evidence>
<evidence type="ECO:0000255" key="2">
    <source>
        <dbReference type="PROSITE-ProRule" id="PRU01066"/>
    </source>
</evidence>
<keyword id="KW-0450">Lipoyl</keyword>
<feature type="chain" id="PRO_1000114561" description="Glycine cleavage system H protein">
    <location>
        <begin position="1"/>
        <end position="131"/>
    </location>
</feature>
<feature type="domain" description="Lipoyl-binding" evidence="2">
    <location>
        <begin position="24"/>
        <end position="106"/>
    </location>
</feature>
<feature type="modified residue" description="N6-lipoyllysine" evidence="1">
    <location>
        <position position="65"/>
    </location>
</feature>
<organism>
    <name type="scientific">Xanthomonas oryzae pv. oryzae (strain PXO99A)</name>
    <dbReference type="NCBI Taxonomy" id="360094"/>
    <lineage>
        <taxon>Bacteria</taxon>
        <taxon>Pseudomonadati</taxon>
        <taxon>Pseudomonadota</taxon>
        <taxon>Gammaproteobacteria</taxon>
        <taxon>Lysobacterales</taxon>
        <taxon>Lysobacteraceae</taxon>
        <taxon>Xanthomonas</taxon>
    </lineage>
</organism>
<comment type="function">
    <text evidence="1">The glycine cleavage system catalyzes the degradation of glycine. The H protein shuttles the methylamine group of glycine from the P protein to the T protein.</text>
</comment>
<comment type="cofactor">
    <cofactor evidence="1">
        <name>(R)-lipoate</name>
        <dbReference type="ChEBI" id="CHEBI:83088"/>
    </cofactor>
    <text evidence="1">Binds 1 lipoyl cofactor covalently.</text>
</comment>
<comment type="subunit">
    <text evidence="1">The glycine cleavage system is composed of four proteins: P, T, L and H.</text>
</comment>
<comment type="similarity">
    <text evidence="1">Belongs to the GcvH family.</text>
</comment>
<protein>
    <recommendedName>
        <fullName evidence="1">Glycine cleavage system H protein</fullName>
    </recommendedName>
</protein>
<sequence length="131" mass="14129">MSEIPGDLKFLKSHEWARIESNGRVTVGISDHAQGLLGDLVYVELPGVGDTVQVGNGAAVVESVKAASDVYSPVSGTVVEVNSALSDKPETINEDAYGEGWIFVVEIDDKEQLNDLLDPDDYAELLEDDEH</sequence>